<comment type="function">
    <text evidence="3 8 10">Acts as a scaffold for the formation of a ternary MAP3K2/MAP3K3-MAP3K5-MAPK7 signaling complex. Activation of this pathway appears to play a critical role in protecting cells from stress-induced apoptosis, neuronal survival and cardiac development and angiogenesis. As part of the MAPK/ERK signaling pathway, acts as a negative regulator of apoptosis in cardiomyocytes via promotion of STUB1/CHIP-mediated ubiquitination and degradation of ICER-type isoforms of CREM (By similarity).</text>
</comment>
<comment type="catalytic activity">
    <reaction>
        <text>L-seryl-[protein] + ATP = O-phospho-L-seryl-[protein] + ADP + H(+)</text>
        <dbReference type="Rhea" id="RHEA:17989"/>
        <dbReference type="Rhea" id="RHEA-COMP:9863"/>
        <dbReference type="Rhea" id="RHEA-COMP:11604"/>
        <dbReference type="ChEBI" id="CHEBI:15378"/>
        <dbReference type="ChEBI" id="CHEBI:29999"/>
        <dbReference type="ChEBI" id="CHEBI:30616"/>
        <dbReference type="ChEBI" id="CHEBI:83421"/>
        <dbReference type="ChEBI" id="CHEBI:456216"/>
        <dbReference type="EC" id="2.7.12.2"/>
    </reaction>
</comment>
<comment type="catalytic activity">
    <reaction>
        <text>L-threonyl-[protein] + ATP = O-phospho-L-threonyl-[protein] + ADP + H(+)</text>
        <dbReference type="Rhea" id="RHEA:46608"/>
        <dbReference type="Rhea" id="RHEA-COMP:11060"/>
        <dbReference type="Rhea" id="RHEA-COMP:11605"/>
        <dbReference type="ChEBI" id="CHEBI:15378"/>
        <dbReference type="ChEBI" id="CHEBI:30013"/>
        <dbReference type="ChEBI" id="CHEBI:30616"/>
        <dbReference type="ChEBI" id="CHEBI:61977"/>
        <dbReference type="ChEBI" id="CHEBI:456216"/>
        <dbReference type="EC" id="2.7.12.2"/>
    </reaction>
</comment>
<comment type="catalytic activity">
    <reaction>
        <text>L-tyrosyl-[protein] + ATP = O-phospho-L-tyrosyl-[protein] + ADP + H(+)</text>
        <dbReference type="Rhea" id="RHEA:10596"/>
        <dbReference type="Rhea" id="RHEA-COMP:10136"/>
        <dbReference type="Rhea" id="RHEA-COMP:20101"/>
        <dbReference type="ChEBI" id="CHEBI:15378"/>
        <dbReference type="ChEBI" id="CHEBI:30616"/>
        <dbReference type="ChEBI" id="CHEBI:46858"/>
        <dbReference type="ChEBI" id="CHEBI:61978"/>
        <dbReference type="ChEBI" id="CHEBI:456216"/>
        <dbReference type="EC" id="2.7.12.2"/>
    </reaction>
</comment>
<comment type="cofactor">
    <cofactor>
        <name>Mg(2+)</name>
        <dbReference type="ChEBI" id="CHEBI:18420"/>
    </cofactor>
</comment>
<comment type="subunit">
    <text evidence="9 10">Interacts with PARD6A, MAP3K3 and MAPK7. Forms a complex with SQSTM1 and PRKCZ or PRKCI.</text>
</comment>
<comment type="interaction">
    <interactant intactId="EBI-446144">
        <id>Q9WVS7</id>
    </interactant>
    <interactant intactId="EBI-446134">
        <id>Q61083</id>
        <label>Map3k2</label>
    </interactant>
    <organismsDiffer>false</organismsDiffer>
    <experiments>4</experiments>
</comment>
<comment type="interaction">
    <interactant intactId="EBI-446144">
        <id>Q9WVS7</id>
    </interactant>
    <interactant intactId="EBI-446250">
        <id>Q61084</id>
        <label>Map3k3</label>
    </interactant>
    <organismsDiffer>false</organismsDiffer>
    <experiments>15</experiments>
</comment>
<comment type="interaction">
    <interactant intactId="EBI-446144">
        <id>Q9WVS7</id>
    </interactant>
    <interactant intactId="EBI-645055">
        <id>P28656</id>
        <label>Nap1l1</label>
    </interactant>
    <organismsDiffer>false</organismsDiffer>
    <experiments>20</experiments>
</comment>
<comment type="interaction">
    <interactant intactId="EBI-446144">
        <id>Q9WVS7</id>
    </interactant>
    <interactant intactId="EBI-645025">
        <id>Q64337</id>
        <label>Sqstm1</label>
    </interactant>
    <organismsDiffer>false</organismsDiffer>
    <experiments>3</experiments>
</comment>
<comment type="subcellular location">
    <subcellularLocation>
        <location evidence="1">Cytoplasm</location>
    </subcellularLocation>
</comment>
<comment type="alternative products">
    <event type="alternative splicing"/>
    <isoform>
        <id>Q9WVS7-1</id>
        <name>1</name>
        <sequence type="displayed"/>
    </isoform>
    <isoform>
        <id>Q9WVS7-2</id>
        <name>2</name>
        <sequence type="described" ref="VSP_015840"/>
    </isoform>
    <isoform>
        <id>Q9WVS7-3</id>
        <name>3</name>
        <sequence type="described" ref="VSP_015838 VSP_015839"/>
    </isoform>
    <isoform>
        <id>Q9WVS7-4</id>
        <name>4</name>
        <sequence type="described" ref="VSP_015836 VSP_015837"/>
    </isoform>
</comment>
<comment type="domain">
    <text evidence="9 10">Binds MAP3K2/MAP3K3 and MAPK7 via non-overlapping residues of the PB1 domain. This domain also mediates interactions with SQSTM1 and PARD6A.</text>
</comment>
<comment type="PTM">
    <text evidence="1">Activated by phosphorylation on Ser/Thr by MAP kinase kinase kinases.</text>
</comment>
<comment type="similarity">
    <text evidence="13">Belongs to the protein kinase superfamily. STE Ser/Thr protein kinase family. MAP kinase kinase subfamily.</text>
</comment>
<organism>
    <name type="scientific">Mus musculus</name>
    <name type="common">Mouse</name>
    <dbReference type="NCBI Taxonomy" id="10090"/>
    <lineage>
        <taxon>Eukaryota</taxon>
        <taxon>Metazoa</taxon>
        <taxon>Chordata</taxon>
        <taxon>Craniata</taxon>
        <taxon>Vertebrata</taxon>
        <taxon>Euteleostomi</taxon>
        <taxon>Mammalia</taxon>
        <taxon>Eutheria</taxon>
        <taxon>Euarchontoglires</taxon>
        <taxon>Glires</taxon>
        <taxon>Rodentia</taxon>
        <taxon>Myomorpha</taxon>
        <taxon>Muroidea</taxon>
        <taxon>Muridae</taxon>
        <taxon>Murinae</taxon>
        <taxon>Mus</taxon>
        <taxon>Mus</taxon>
    </lineage>
</organism>
<proteinExistence type="evidence at protein level"/>
<keyword id="KW-0002">3D-structure</keyword>
<keyword id="KW-0025">Alternative splicing</keyword>
<keyword id="KW-0067">ATP-binding</keyword>
<keyword id="KW-0963">Cytoplasm</keyword>
<keyword id="KW-0418">Kinase</keyword>
<keyword id="KW-0460">Magnesium</keyword>
<keyword id="KW-0479">Metal-binding</keyword>
<keyword id="KW-0547">Nucleotide-binding</keyword>
<keyword id="KW-0597">Phosphoprotein</keyword>
<keyword id="KW-1185">Reference proteome</keyword>
<keyword id="KW-0723">Serine/threonine-protein kinase</keyword>
<keyword id="KW-0808">Transferase</keyword>
<keyword id="KW-0829">Tyrosine-protein kinase</keyword>
<accession>Q9WVS7</accession>
<accession>Q8CFM3</accession>
<accession>Q8K360</accession>
<accession>Q9D222</accession>
<name>MP2K5_MOUSE</name>
<protein>
    <recommendedName>
        <fullName>Dual specificity mitogen-activated protein kinase kinase 5</fullName>
        <shortName>MAP kinase kinase 5</shortName>
        <shortName>MAPKK 5</shortName>
        <ecNumber>2.7.12.2</ecNumber>
    </recommendedName>
    <alternativeName>
        <fullName>MAPK/ERK kinase 5</fullName>
        <shortName>MEK 5</shortName>
    </alternativeName>
</protein>
<dbReference type="EC" id="2.7.12.2"/>
<dbReference type="EMBL" id="AB019374">
    <property type="protein sequence ID" value="BAA82040.1"/>
    <property type="molecule type" value="mRNA"/>
</dbReference>
<dbReference type="EMBL" id="AK020716">
    <property type="protein sequence ID" value="BAB32187.1"/>
    <property type="molecule type" value="mRNA"/>
</dbReference>
<dbReference type="EMBL" id="BC013697">
    <property type="protein sequence ID" value="AAH13697.1"/>
    <property type="molecule type" value="mRNA"/>
</dbReference>
<dbReference type="EMBL" id="BC028260">
    <property type="protein sequence ID" value="AAH28260.1"/>
    <property type="molecule type" value="mRNA"/>
</dbReference>
<dbReference type="CCDS" id="CCDS23269.1">
    <molecule id="Q9WVS7-1"/>
</dbReference>
<dbReference type="RefSeq" id="NP_001351421.1">
    <molecule id="Q9WVS7-3"/>
    <property type="nucleotide sequence ID" value="NM_001364492.1"/>
</dbReference>
<dbReference type="RefSeq" id="NP_001351422.1">
    <molecule id="Q9WVS7-2"/>
    <property type="nucleotide sequence ID" value="NM_001364493.1"/>
</dbReference>
<dbReference type="RefSeq" id="NP_035970.1">
    <molecule id="Q9WVS7-1"/>
    <property type="nucleotide sequence ID" value="NM_011840.3"/>
</dbReference>
<dbReference type="RefSeq" id="XP_006511208.1">
    <property type="nucleotide sequence ID" value="XM_006511145.2"/>
</dbReference>
<dbReference type="PDB" id="1WI0">
    <property type="method" value="NMR"/>
    <property type="chains" value="A=8-107"/>
</dbReference>
<dbReference type="PDBsum" id="1WI0"/>
<dbReference type="SMR" id="Q9WVS7"/>
<dbReference type="BioGRID" id="204805">
    <property type="interactions" value="1"/>
</dbReference>
<dbReference type="CORUM" id="Q9WVS7"/>
<dbReference type="FunCoup" id="Q9WVS7">
    <property type="interactions" value="3630"/>
</dbReference>
<dbReference type="IntAct" id="Q9WVS7">
    <property type="interactions" value="11"/>
</dbReference>
<dbReference type="STRING" id="10090.ENSMUSP00000034920"/>
<dbReference type="GlyGen" id="Q9WVS7">
    <property type="glycosylation" value="1 site, 1 N-linked glycan (1 site)"/>
</dbReference>
<dbReference type="iPTMnet" id="Q9WVS7"/>
<dbReference type="PhosphoSitePlus" id="Q9WVS7"/>
<dbReference type="SwissPalm" id="Q9WVS7"/>
<dbReference type="jPOST" id="Q9WVS7"/>
<dbReference type="PaxDb" id="10090-ENSMUSP00000034920"/>
<dbReference type="ProteomicsDB" id="290291">
    <molecule id="Q9WVS7-1"/>
</dbReference>
<dbReference type="ProteomicsDB" id="290292">
    <molecule id="Q9WVS7-2"/>
</dbReference>
<dbReference type="ProteomicsDB" id="290293">
    <molecule id="Q9WVS7-3"/>
</dbReference>
<dbReference type="ProteomicsDB" id="290294">
    <molecule id="Q9WVS7-4"/>
</dbReference>
<dbReference type="Pumba" id="Q9WVS7"/>
<dbReference type="Antibodypedia" id="26267">
    <property type="antibodies" value="589 antibodies from 38 providers"/>
</dbReference>
<dbReference type="DNASU" id="23938"/>
<dbReference type="Ensembl" id="ENSMUST00000034920.11">
    <molecule id="Q9WVS7-1"/>
    <property type="protein sequence ID" value="ENSMUSP00000034920.10"/>
    <property type="gene ID" value="ENSMUSG00000058444.9"/>
</dbReference>
<dbReference type="GeneID" id="23938"/>
<dbReference type="KEGG" id="mmu:23938"/>
<dbReference type="UCSC" id="uc009qaw.1">
    <molecule id="Q9WVS7-1"/>
    <property type="organism name" value="mouse"/>
</dbReference>
<dbReference type="UCSC" id="uc009qaz.1">
    <molecule id="Q9WVS7-4"/>
    <property type="organism name" value="mouse"/>
</dbReference>
<dbReference type="UCSC" id="uc012guv.1">
    <molecule id="Q9WVS7-2"/>
    <property type="organism name" value="mouse"/>
</dbReference>
<dbReference type="AGR" id="MGI:1346345"/>
<dbReference type="CTD" id="5607"/>
<dbReference type="MGI" id="MGI:1346345">
    <property type="gene designation" value="Map2k5"/>
</dbReference>
<dbReference type="VEuPathDB" id="HostDB:ENSMUSG00000058444"/>
<dbReference type="eggNOG" id="KOG0581">
    <property type="taxonomic scope" value="Eukaryota"/>
</dbReference>
<dbReference type="GeneTree" id="ENSGT00940000157505"/>
<dbReference type="HOGENOM" id="CLU_000288_2_0_1"/>
<dbReference type="InParanoid" id="Q9WVS7"/>
<dbReference type="OMA" id="ANDCTQV"/>
<dbReference type="OrthoDB" id="10252354at2759"/>
<dbReference type="PhylomeDB" id="Q9WVS7"/>
<dbReference type="TreeFam" id="TF106468"/>
<dbReference type="BioGRID-ORCS" id="23938">
    <property type="hits" value="5 hits in 79 CRISPR screens"/>
</dbReference>
<dbReference type="ChiTaRS" id="Map2k5">
    <property type="organism name" value="mouse"/>
</dbReference>
<dbReference type="EvolutionaryTrace" id="Q9WVS7"/>
<dbReference type="PRO" id="PR:Q9WVS7"/>
<dbReference type="Proteomes" id="UP000000589">
    <property type="component" value="Chromosome 9"/>
</dbReference>
<dbReference type="RNAct" id="Q9WVS7">
    <property type="molecule type" value="protein"/>
</dbReference>
<dbReference type="Bgee" id="ENSMUSG00000058444">
    <property type="expression patterns" value="Expressed in internal carotid artery and 260 other cell types or tissues"/>
</dbReference>
<dbReference type="GO" id="GO:0005737">
    <property type="term" value="C:cytoplasm"/>
    <property type="evidence" value="ECO:0007669"/>
    <property type="project" value="UniProtKB-SubCell"/>
</dbReference>
<dbReference type="GO" id="GO:0005819">
    <property type="term" value="C:spindle"/>
    <property type="evidence" value="ECO:0000314"/>
    <property type="project" value="MGI"/>
</dbReference>
<dbReference type="GO" id="GO:0005524">
    <property type="term" value="F:ATP binding"/>
    <property type="evidence" value="ECO:0007669"/>
    <property type="project" value="UniProtKB-KW"/>
</dbReference>
<dbReference type="GO" id="GO:0004708">
    <property type="term" value="F:MAP kinase kinase activity"/>
    <property type="evidence" value="ECO:0000314"/>
    <property type="project" value="MGI"/>
</dbReference>
<dbReference type="GO" id="GO:0046872">
    <property type="term" value="F:metal ion binding"/>
    <property type="evidence" value="ECO:0007669"/>
    <property type="project" value="UniProtKB-KW"/>
</dbReference>
<dbReference type="GO" id="GO:0106310">
    <property type="term" value="F:protein serine kinase activity"/>
    <property type="evidence" value="ECO:0007669"/>
    <property type="project" value="RHEA"/>
</dbReference>
<dbReference type="GO" id="GO:0004674">
    <property type="term" value="F:protein serine/threonine kinase activity"/>
    <property type="evidence" value="ECO:0007669"/>
    <property type="project" value="UniProtKB-KW"/>
</dbReference>
<dbReference type="GO" id="GO:0004713">
    <property type="term" value="F:protein tyrosine kinase activity"/>
    <property type="evidence" value="ECO:0007669"/>
    <property type="project" value="UniProtKB-KW"/>
</dbReference>
<dbReference type="GO" id="GO:0071363">
    <property type="term" value="P:cellular response to growth factor stimulus"/>
    <property type="evidence" value="ECO:0007669"/>
    <property type="project" value="Ensembl"/>
</dbReference>
<dbReference type="GO" id="GO:0070375">
    <property type="term" value="P:ERK5 cascade"/>
    <property type="evidence" value="ECO:0007669"/>
    <property type="project" value="Ensembl"/>
</dbReference>
<dbReference type="GO" id="GO:0007507">
    <property type="term" value="P:heart development"/>
    <property type="evidence" value="ECO:0000315"/>
    <property type="project" value="MGI"/>
</dbReference>
<dbReference type="GO" id="GO:0048009">
    <property type="term" value="P:insulin-like growth factor receptor signaling pathway"/>
    <property type="evidence" value="ECO:0000314"/>
    <property type="project" value="MGI"/>
</dbReference>
<dbReference type="GO" id="GO:0000165">
    <property type="term" value="P:MAPK cascade"/>
    <property type="evidence" value="ECO:0000315"/>
    <property type="project" value="MGI"/>
</dbReference>
<dbReference type="GO" id="GO:0043124">
    <property type="term" value="P:negative regulation of canonical NF-kappaB signal transduction"/>
    <property type="evidence" value="ECO:0007669"/>
    <property type="project" value="Ensembl"/>
</dbReference>
<dbReference type="GO" id="GO:0090051">
    <property type="term" value="P:negative regulation of cell migration involved in sprouting angiogenesis"/>
    <property type="evidence" value="ECO:0007669"/>
    <property type="project" value="Ensembl"/>
</dbReference>
<dbReference type="GO" id="GO:2000342">
    <property type="term" value="P:negative regulation of chemokine (C-X-C motif) ligand 2 production"/>
    <property type="evidence" value="ECO:0007669"/>
    <property type="project" value="Ensembl"/>
</dbReference>
<dbReference type="GO" id="GO:2001240">
    <property type="term" value="P:negative regulation of extrinsic apoptotic signaling pathway in absence of ligand"/>
    <property type="evidence" value="ECO:0007669"/>
    <property type="project" value="Ensembl"/>
</dbReference>
<dbReference type="GO" id="GO:0034115">
    <property type="term" value="P:negative regulation of heterotypic cell-cell adhesion"/>
    <property type="evidence" value="ECO:0007669"/>
    <property type="project" value="Ensembl"/>
</dbReference>
<dbReference type="GO" id="GO:0032717">
    <property type="term" value="P:negative regulation of interleukin-8 production"/>
    <property type="evidence" value="ECO:0007669"/>
    <property type="project" value="Ensembl"/>
</dbReference>
<dbReference type="GO" id="GO:0060761">
    <property type="term" value="P:negative regulation of response to cytokine stimulus"/>
    <property type="evidence" value="ECO:0007669"/>
    <property type="project" value="Ensembl"/>
</dbReference>
<dbReference type="GO" id="GO:0034392">
    <property type="term" value="P:negative regulation of smooth muscle cell apoptotic process"/>
    <property type="evidence" value="ECO:0000250"/>
    <property type="project" value="UniProtKB"/>
</dbReference>
<dbReference type="GO" id="GO:0000122">
    <property type="term" value="P:negative regulation of transcription by RNA polymerase II"/>
    <property type="evidence" value="ECO:0007669"/>
    <property type="project" value="Ensembl"/>
</dbReference>
<dbReference type="GO" id="GO:0030307">
    <property type="term" value="P:positive regulation of cell growth"/>
    <property type="evidence" value="ECO:0007669"/>
    <property type="project" value="Ensembl"/>
</dbReference>
<dbReference type="GO" id="GO:0050679">
    <property type="term" value="P:positive regulation of epithelial cell proliferation"/>
    <property type="evidence" value="ECO:0007669"/>
    <property type="project" value="Ensembl"/>
</dbReference>
<dbReference type="GO" id="GO:0051247">
    <property type="term" value="P:positive regulation of protein metabolic process"/>
    <property type="evidence" value="ECO:0007669"/>
    <property type="project" value="Ensembl"/>
</dbReference>
<dbReference type="GO" id="GO:0045944">
    <property type="term" value="P:positive regulation of transcription by RNA polymerase II"/>
    <property type="evidence" value="ECO:0007669"/>
    <property type="project" value="Ensembl"/>
</dbReference>
<dbReference type="CDD" id="cd06395">
    <property type="entry name" value="PB1_Map2k5"/>
    <property type="match status" value="1"/>
</dbReference>
<dbReference type="CDD" id="cd06619">
    <property type="entry name" value="PKc_MKK5"/>
    <property type="match status" value="1"/>
</dbReference>
<dbReference type="FunFam" id="1.10.510.10:FF:000296">
    <property type="entry name" value="Dual specificity mitogen-activated protein kinase kinase 5"/>
    <property type="match status" value="1"/>
</dbReference>
<dbReference type="FunFam" id="3.10.20.90:FF:000085">
    <property type="entry name" value="Dual specificity mitogen-activated protein kinase kinase 5"/>
    <property type="match status" value="1"/>
</dbReference>
<dbReference type="FunFam" id="3.30.200.20:FF:000197">
    <property type="entry name" value="dual specificity mitogen-activated protein kinase kinase 5"/>
    <property type="match status" value="1"/>
</dbReference>
<dbReference type="Gene3D" id="3.10.20.90">
    <property type="entry name" value="Phosphatidylinositol 3-kinase Catalytic Subunit, Chain A, domain 1"/>
    <property type="match status" value="1"/>
</dbReference>
<dbReference type="Gene3D" id="3.30.200.20">
    <property type="entry name" value="Phosphorylase Kinase, domain 1"/>
    <property type="match status" value="1"/>
</dbReference>
<dbReference type="Gene3D" id="1.10.510.10">
    <property type="entry name" value="Transferase(Phosphotransferase) domain 1"/>
    <property type="match status" value="1"/>
</dbReference>
<dbReference type="InterPro" id="IPR052468">
    <property type="entry name" value="Dual_spec_MAPK_kinase"/>
</dbReference>
<dbReference type="InterPro" id="IPR011009">
    <property type="entry name" value="Kinase-like_dom_sf"/>
</dbReference>
<dbReference type="InterPro" id="IPR053793">
    <property type="entry name" value="PB1-like"/>
</dbReference>
<dbReference type="InterPro" id="IPR000270">
    <property type="entry name" value="PB1_dom"/>
</dbReference>
<dbReference type="InterPro" id="IPR034851">
    <property type="entry name" value="PB1_MAP2K5"/>
</dbReference>
<dbReference type="InterPro" id="IPR000719">
    <property type="entry name" value="Prot_kinase_dom"/>
</dbReference>
<dbReference type="InterPro" id="IPR017441">
    <property type="entry name" value="Protein_kinase_ATP_BS"/>
</dbReference>
<dbReference type="InterPro" id="IPR008271">
    <property type="entry name" value="Ser/Thr_kinase_AS"/>
</dbReference>
<dbReference type="PANTHER" id="PTHR47238">
    <property type="entry name" value="MITOGEN-ACTIVATED PROTEIN KINASE KINASE 5"/>
    <property type="match status" value="1"/>
</dbReference>
<dbReference type="PANTHER" id="PTHR47238:SF4">
    <property type="entry name" value="MITOGEN-ACTIVATED PROTEIN KINASE KINASE 5"/>
    <property type="match status" value="1"/>
</dbReference>
<dbReference type="Pfam" id="PF00564">
    <property type="entry name" value="PB1"/>
    <property type="match status" value="1"/>
</dbReference>
<dbReference type="Pfam" id="PF00069">
    <property type="entry name" value="Pkinase"/>
    <property type="match status" value="1"/>
</dbReference>
<dbReference type="SMART" id="SM00666">
    <property type="entry name" value="PB1"/>
    <property type="match status" value="1"/>
</dbReference>
<dbReference type="SMART" id="SM00220">
    <property type="entry name" value="S_TKc"/>
    <property type="match status" value="1"/>
</dbReference>
<dbReference type="SUPFAM" id="SSF54277">
    <property type="entry name" value="CAD &amp; PB1 domains"/>
    <property type="match status" value="1"/>
</dbReference>
<dbReference type="SUPFAM" id="SSF56112">
    <property type="entry name" value="Protein kinase-like (PK-like)"/>
    <property type="match status" value="1"/>
</dbReference>
<dbReference type="PROSITE" id="PS51745">
    <property type="entry name" value="PB1"/>
    <property type="match status" value="1"/>
</dbReference>
<dbReference type="PROSITE" id="PS00107">
    <property type="entry name" value="PROTEIN_KINASE_ATP"/>
    <property type="match status" value="1"/>
</dbReference>
<dbReference type="PROSITE" id="PS50011">
    <property type="entry name" value="PROTEIN_KINASE_DOM"/>
    <property type="match status" value="1"/>
</dbReference>
<dbReference type="PROSITE" id="PS00108">
    <property type="entry name" value="PROTEIN_KINASE_ST"/>
    <property type="match status" value="1"/>
</dbReference>
<gene>
    <name type="primary">Map2k5</name>
    <name type="synonym">Mek5</name>
    <name type="synonym">Mkk5</name>
    <name type="synonym">Prkmk5</name>
</gene>
<evidence type="ECO:0000250" key="1"/>
<evidence type="ECO:0000250" key="2">
    <source>
        <dbReference type="UniProtKB" id="Q13163"/>
    </source>
</evidence>
<evidence type="ECO:0000250" key="3">
    <source>
        <dbReference type="UniProtKB" id="Q62862"/>
    </source>
</evidence>
<evidence type="ECO:0000255" key="4">
    <source>
        <dbReference type="PROSITE-ProRule" id="PRU00159"/>
    </source>
</evidence>
<evidence type="ECO:0000255" key="5">
    <source>
        <dbReference type="PROSITE-ProRule" id="PRU01081"/>
    </source>
</evidence>
<evidence type="ECO:0000255" key="6">
    <source>
        <dbReference type="PROSITE-ProRule" id="PRU10027"/>
    </source>
</evidence>
<evidence type="ECO:0000256" key="7">
    <source>
        <dbReference type="SAM" id="MobiDB-lite"/>
    </source>
</evidence>
<evidence type="ECO:0000269" key="8">
    <source>
    </source>
</evidence>
<evidence type="ECO:0000269" key="9">
    <source>
    </source>
</evidence>
<evidence type="ECO:0000269" key="10">
    <source>
    </source>
</evidence>
<evidence type="ECO:0000303" key="11">
    <source>
    </source>
</evidence>
<evidence type="ECO:0000303" key="12">
    <source>
    </source>
</evidence>
<evidence type="ECO:0000305" key="13"/>
<evidence type="ECO:0007829" key="14">
    <source>
        <dbReference type="PDB" id="1WI0"/>
    </source>
</evidence>
<feature type="chain" id="PRO_0000086384" description="Dual specificity mitogen-activated protein kinase kinase 5">
    <location>
        <begin position="1"/>
        <end position="448"/>
    </location>
</feature>
<feature type="domain" description="PB1" evidence="5">
    <location>
        <begin position="18"/>
        <end position="109"/>
    </location>
</feature>
<feature type="domain" description="Protein kinase" evidence="4">
    <location>
        <begin position="166"/>
        <end position="419"/>
    </location>
</feature>
<feature type="region of interest" description="Interaction with MAPK7" evidence="10">
    <location>
        <begin position="18"/>
        <end position="25"/>
    </location>
</feature>
<feature type="region of interest" description="Interaction with MAP3K2/MAP3K3" evidence="9 10">
    <location>
        <begin position="64"/>
        <end position="68"/>
    </location>
</feature>
<feature type="region of interest" description="Disordered" evidence="7">
    <location>
        <begin position="116"/>
        <end position="144"/>
    </location>
</feature>
<feature type="region of interest" description="Interaction with MAPK7" evidence="10">
    <location>
        <begin position="117"/>
        <end position="131"/>
    </location>
</feature>
<feature type="compositionally biased region" description="Polar residues" evidence="7">
    <location>
        <begin position="126"/>
        <end position="144"/>
    </location>
</feature>
<feature type="active site" description="Proton acceptor" evidence="4 6">
    <location>
        <position position="283"/>
    </location>
</feature>
<feature type="binding site" evidence="4">
    <location>
        <begin position="172"/>
        <end position="180"/>
    </location>
    <ligand>
        <name>ATP</name>
        <dbReference type="ChEBI" id="CHEBI:30616"/>
    </ligand>
</feature>
<feature type="binding site" evidence="4">
    <location>
        <position position="195"/>
    </location>
    <ligand>
        <name>ATP</name>
        <dbReference type="ChEBI" id="CHEBI:30616"/>
    </ligand>
</feature>
<feature type="modified residue" description="Phosphoserine" evidence="2">
    <location>
        <position position="311"/>
    </location>
</feature>
<feature type="modified residue" description="Phosphothreonine" evidence="2">
    <location>
        <position position="315"/>
    </location>
</feature>
<feature type="splice variant" id="VSP_015836" description="In isoform 4." evidence="12">
    <original>ACKPPGERNIH</original>
    <variation>GYRRGSRLREY</variation>
    <location>
        <begin position="108"/>
        <end position="118"/>
    </location>
</feature>
<feature type="splice variant" id="VSP_015837" description="In isoform 4." evidence="12">
    <location>
        <begin position="119"/>
        <end position="448"/>
    </location>
</feature>
<feature type="splice variant" id="VSP_015838" description="In isoform 3." evidence="11">
    <original>AHHV</original>
    <variation>LLHI</variation>
    <location>
        <begin position="183"/>
        <end position="186"/>
    </location>
</feature>
<feature type="splice variant" id="VSP_015839" description="In isoform 3." evidence="11">
    <location>
        <begin position="187"/>
        <end position="448"/>
    </location>
</feature>
<feature type="splice variant" id="VSP_015840" description="In isoform 2." evidence="11">
    <location>
        <begin position="359"/>
        <end position="367"/>
    </location>
</feature>
<feature type="mutagenesis site" description="Loss of MAPK7 binding; when associated with A-21." evidence="10">
    <original>R</original>
    <variation>A</variation>
    <location>
        <position position="20"/>
    </location>
</feature>
<feature type="mutagenesis site" description="Loss of MAPK7 binding; when associated with A-20." evidence="10">
    <original>I</original>
    <variation>A</variation>
    <location>
        <position position="21"/>
    </location>
</feature>
<feature type="mutagenesis site" description="Loss of MAP3K2/MAP3K3 binding; when associated with A-65." evidence="10">
    <original>D</original>
    <variation>A</variation>
    <location>
        <position position="64"/>
    </location>
</feature>
<feature type="mutagenesis site" description="Loss of MAP3K2/MAP3K3 binding; when associated with A-64." evidence="10">
    <original>E</original>
    <variation>A</variation>
    <location>
        <position position="65"/>
    </location>
</feature>
<feature type="mutagenesis site" description="Loss of MAP3K2/MAP3K3 binding; when associated with A-68." evidence="10">
    <original>G</original>
    <variation>A</variation>
    <location>
        <position position="67"/>
    </location>
</feature>
<feature type="mutagenesis site" description="Loss of MAP3K2/MAP3K3 binding; when associated with A-67." evidence="10">
    <original>D</original>
    <variation>A</variation>
    <location>
        <position position="68"/>
    </location>
</feature>
<feature type="mutagenesis site" description="Dominant negative form; when associated with V-315." evidence="8">
    <original>S</original>
    <variation>A</variation>
    <location>
        <position position="311"/>
    </location>
</feature>
<feature type="mutagenesis site" description="Dominant active form; when associated with D-315." evidence="8">
    <original>S</original>
    <variation>D</variation>
    <location>
        <position position="311"/>
    </location>
</feature>
<feature type="mutagenesis site" description="Dominant active form; when associated with D-311." evidence="8">
    <original>T</original>
    <variation>D</variation>
    <location>
        <position position="315"/>
    </location>
</feature>
<feature type="mutagenesis site" description="Dominant negative form; when associated with A-311." evidence="8">
    <original>T</original>
    <variation>V</variation>
    <location>
        <position position="315"/>
    </location>
</feature>
<feature type="strand" evidence="14">
    <location>
        <begin position="17"/>
        <end position="22"/>
    </location>
</feature>
<feature type="strand" evidence="14">
    <location>
        <begin position="28"/>
        <end position="34"/>
    </location>
</feature>
<feature type="strand" evidence="14">
    <location>
        <begin position="36"/>
        <end position="38"/>
    </location>
</feature>
<feature type="helix" evidence="14">
    <location>
        <begin position="41"/>
        <end position="51"/>
    </location>
</feature>
<feature type="strand" evidence="14">
    <location>
        <begin position="60"/>
        <end position="62"/>
    </location>
</feature>
<feature type="strand" evidence="14">
    <location>
        <begin position="70"/>
        <end position="74"/>
    </location>
</feature>
<feature type="helix" evidence="14">
    <location>
        <begin position="75"/>
        <end position="95"/>
    </location>
</feature>
<feature type="strand" evidence="14">
    <location>
        <begin position="102"/>
        <end position="106"/>
    </location>
</feature>
<reference key="1">
    <citation type="journal article" date="1999" name="J. Biol. Chem.">
        <title>Activation of the protein kinase ERK5/BMK1 by receptor tyrosine kinases. Identification and characterization of a signaling pathway to the nucleus.</title>
        <authorList>
            <person name="Kamakura S."/>
            <person name="Moriguchi T."/>
            <person name="Nishida E."/>
        </authorList>
    </citation>
    <scope>NUCLEOTIDE SEQUENCE [MRNA] (ISOFORM 1)</scope>
    <scope>FUNCTION</scope>
    <scope>MUTAGENESIS OF SER-311 AND THR-315</scope>
    <source>
        <tissue>Brain</tissue>
    </source>
</reference>
<reference key="2">
    <citation type="journal article" date="2005" name="Science">
        <title>The transcriptional landscape of the mammalian genome.</title>
        <authorList>
            <person name="Carninci P."/>
            <person name="Kasukawa T."/>
            <person name="Katayama S."/>
            <person name="Gough J."/>
            <person name="Frith M.C."/>
            <person name="Maeda N."/>
            <person name="Oyama R."/>
            <person name="Ravasi T."/>
            <person name="Lenhard B."/>
            <person name="Wells C."/>
            <person name="Kodzius R."/>
            <person name="Shimokawa K."/>
            <person name="Bajic V.B."/>
            <person name="Brenner S.E."/>
            <person name="Batalov S."/>
            <person name="Forrest A.R."/>
            <person name="Zavolan M."/>
            <person name="Davis M.J."/>
            <person name="Wilming L.G."/>
            <person name="Aidinis V."/>
            <person name="Allen J.E."/>
            <person name="Ambesi-Impiombato A."/>
            <person name="Apweiler R."/>
            <person name="Aturaliya R.N."/>
            <person name="Bailey T.L."/>
            <person name="Bansal M."/>
            <person name="Baxter L."/>
            <person name="Beisel K.W."/>
            <person name="Bersano T."/>
            <person name="Bono H."/>
            <person name="Chalk A.M."/>
            <person name="Chiu K.P."/>
            <person name="Choudhary V."/>
            <person name="Christoffels A."/>
            <person name="Clutterbuck D.R."/>
            <person name="Crowe M.L."/>
            <person name="Dalla E."/>
            <person name="Dalrymple B.P."/>
            <person name="de Bono B."/>
            <person name="Della Gatta G."/>
            <person name="di Bernardo D."/>
            <person name="Down T."/>
            <person name="Engstrom P."/>
            <person name="Fagiolini M."/>
            <person name="Faulkner G."/>
            <person name="Fletcher C.F."/>
            <person name="Fukushima T."/>
            <person name="Furuno M."/>
            <person name="Futaki S."/>
            <person name="Gariboldi M."/>
            <person name="Georgii-Hemming P."/>
            <person name="Gingeras T.R."/>
            <person name="Gojobori T."/>
            <person name="Green R.E."/>
            <person name="Gustincich S."/>
            <person name="Harbers M."/>
            <person name="Hayashi Y."/>
            <person name="Hensch T.K."/>
            <person name="Hirokawa N."/>
            <person name="Hill D."/>
            <person name="Huminiecki L."/>
            <person name="Iacono M."/>
            <person name="Ikeo K."/>
            <person name="Iwama A."/>
            <person name="Ishikawa T."/>
            <person name="Jakt M."/>
            <person name="Kanapin A."/>
            <person name="Katoh M."/>
            <person name="Kawasawa Y."/>
            <person name="Kelso J."/>
            <person name="Kitamura H."/>
            <person name="Kitano H."/>
            <person name="Kollias G."/>
            <person name="Krishnan S.P."/>
            <person name="Kruger A."/>
            <person name="Kummerfeld S.K."/>
            <person name="Kurochkin I.V."/>
            <person name="Lareau L.F."/>
            <person name="Lazarevic D."/>
            <person name="Lipovich L."/>
            <person name="Liu J."/>
            <person name="Liuni S."/>
            <person name="McWilliam S."/>
            <person name="Madan Babu M."/>
            <person name="Madera M."/>
            <person name="Marchionni L."/>
            <person name="Matsuda H."/>
            <person name="Matsuzawa S."/>
            <person name="Miki H."/>
            <person name="Mignone F."/>
            <person name="Miyake S."/>
            <person name="Morris K."/>
            <person name="Mottagui-Tabar S."/>
            <person name="Mulder N."/>
            <person name="Nakano N."/>
            <person name="Nakauchi H."/>
            <person name="Ng P."/>
            <person name="Nilsson R."/>
            <person name="Nishiguchi S."/>
            <person name="Nishikawa S."/>
            <person name="Nori F."/>
            <person name="Ohara O."/>
            <person name="Okazaki Y."/>
            <person name="Orlando V."/>
            <person name="Pang K.C."/>
            <person name="Pavan W.J."/>
            <person name="Pavesi G."/>
            <person name="Pesole G."/>
            <person name="Petrovsky N."/>
            <person name="Piazza S."/>
            <person name="Reed J."/>
            <person name="Reid J.F."/>
            <person name="Ring B.Z."/>
            <person name="Ringwald M."/>
            <person name="Rost B."/>
            <person name="Ruan Y."/>
            <person name="Salzberg S.L."/>
            <person name="Sandelin A."/>
            <person name="Schneider C."/>
            <person name="Schoenbach C."/>
            <person name="Sekiguchi K."/>
            <person name="Semple C.A."/>
            <person name="Seno S."/>
            <person name="Sessa L."/>
            <person name="Sheng Y."/>
            <person name="Shibata Y."/>
            <person name="Shimada H."/>
            <person name="Shimada K."/>
            <person name="Silva D."/>
            <person name="Sinclair B."/>
            <person name="Sperling S."/>
            <person name="Stupka E."/>
            <person name="Sugiura K."/>
            <person name="Sultana R."/>
            <person name="Takenaka Y."/>
            <person name="Taki K."/>
            <person name="Tammoja K."/>
            <person name="Tan S.L."/>
            <person name="Tang S."/>
            <person name="Taylor M.S."/>
            <person name="Tegner J."/>
            <person name="Teichmann S.A."/>
            <person name="Ueda H.R."/>
            <person name="van Nimwegen E."/>
            <person name="Verardo R."/>
            <person name="Wei C.L."/>
            <person name="Yagi K."/>
            <person name="Yamanishi H."/>
            <person name="Zabarovsky E."/>
            <person name="Zhu S."/>
            <person name="Zimmer A."/>
            <person name="Hide W."/>
            <person name="Bult C."/>
            <person name="Grimmond S.M."/>
            <person name="Teasdale R.D."/>
            <person name="Liu E.T."/>
            <person name="Brusic V."/>
            <person name="Quackenbush J."/>
            <person name="Wahlestedt C."/>
            <person name="Mattick J.S."/>
            <person name="Hume D.A."/>
            <person name="Kai C."/>
            <person name="Sasaki D."/>
            <person name="Tomaru Y."/>
            <person name="Fukuda S."/>
            <person name="Kanamori-Katayama M."/>
            <person name="Suzuki M."/>
            <person name="Aoki J."/>
            <person name="Arakawa T."/>
            <person name="Iida J."/>
            <person name="Imamura K."/>
            <person name="Itoh M."/>
            <person name="Kato T."/>
            <person name="Kawaji H."/>
            <person name="Kawagashira N."/>
            <person name="Kawashima T."/>
            <person name="Kojima M."/>
            <person name="Kondo S."/>
            <person name="Konno H."/>
            <person name="Nakano K."/>
            <person name="Ninomiya N."/>
            <person name="Nishio T."/>
            <person name="Okada M."/>
            <person name="Plessy C."/>
            <person name="Shibata K."/>
            <person name="Shiraki T."/>
            <person name="Suzuki S."/>
            <person name="Tagami M."/>
            <person name="Waki K."/>
            <person name="Watahiki A."/>
            <person name="Okamura-Oho Y."/>
            <person name="Suzuki H."/>
            <person name="Kawai J."/>
            <person name="Hayashizaki Y."/>
        </authorList>
    </citation>
    <scope>NUCLEOTIDE SEQUENCE [LARGE SCALE MRNA] (ISOFORM 4)</scope>
    <source>
        <strain>C57BL/6J</strain>
        <tissue>Head</tissue>
        <tissue>Hypothalamus</tissue>
    </source>
</reference>
<reference key="3">
    <citation type="journal article" date="2004" name="Genome Res.">
        <title>The status, quality, and expansion of the NIH full-length cDNA project: the Mammalian Gene Collection (MGC).</title>
        <authorList>
            <consortium name="The MGC Project Team"/>
        </authorList>
    </citation>
    <scope>NUCLEOTIDE SEQUENCE [LARGE SCALE MRNA] (ISOFORMS 2 AND 3)</scope>
    <source>
        <strain>Czech II</strain>
        <tissue>Mammary gland</tissue>
    </source>
</reference>
<reference key="4">
    <citation type="journal article" date="2003" name="J. Biol. Chem.">
        <title>Interaction codes within the family of mammalian Phox and Bem1p domain-containing proteins.</title>
        <authorList>
            <person name="Lamark T."/>
            <person name="Perander M."/>
            <person name="Outzen H."/>
            <person name="Kristiansen K."/>
            <person name="Oevervatn A."/>
            <person name="Michaelsen E."/>
            <person name="Bjoerkoey G."/>
            <person name="Johansen T."/>
        </authorList>
    </citation>
    <scope>INTERACTION WITH SQSTM1; PRKCZ; PRKCI; PARD6A AND MAP3K3</scope>
    <scope>DOMAIN</scope>
</reference>
<reference key="5">
    <citation type="journal article" date="2006" name="Mol. Cell. Biol.">
        <title>PB1 domain-dependent signaling complex is required for extracellular signal-regulated kinase 5 activation.</title>
        <authorList>
            <person name="Nakamura K."/>
            <person name="Uhlik M.T."/>
            <person name="Johnson N.L."/>
            <person name="Hahn K.M."/>
            <person name="Johnson G.L."/>
        </authorList>
    </citation>
    <scope>FUNCTION</scope>
    <scope>DOMAIN</scope>
    <scope>INTERACTION WITH MAP3K2 AND MAPK7</scope>
    <scope>MUTAGENESIS OF ARG-20; ILE-21; ASP-64; GLU-65; GLY-67 AND ASP-68</scope>
</reference>
<reference key="6">
    <citation type="journal article" date="2010" name="Cell">
        <title>A tissue-specific atlas of mouse protein phosphorylation and expression.</title>
        <authorList>
            <person name="Huttlin E.L."/>
            <person name="Jedrychowski M.P."/>
            <person name="Elias J.E."/>
            <person name="Goswami T."/>
            <person name="Rad R."/>
            <person name="Beausoleil S.A."/>
            <person name="Villen J."/>
            <person name="Haas W."/>
            <person name="Sowa M.E."/>
            <person name="Gygi S.P."/>
        </authorList>
    </citation>
    <scope>IDENTIFICATION BY MASS SPECTROMETRY [LARGE SCALE ANALYSIS]</scope>
    <source>
        <tissue>Testis</tissue>
    </source>
</reference>
<reference key="7">
    <citation type="submission" date="2006-01" db="PDB data bank">
        <title>Solution structure of the PB1 domain of mouse mitogen activated protein kinase kinase 5 (MAP2K5).</title>
        <authorList>
            <consortium name="RIKEN structural genomics initiative (RSGI)"/>
        </authorList>
    </citation>
    <scope>STRUCTURE BY NMR OF 7-107</scope>
</reference>
<sequence length="448" mass="50105">MLWLALGPFCAMENQVLVIRIKIPNSGAVDWTVHSGPQLLFRDVLDVIGQVLPEATTTAFEYEDEDGDRITVRSDEEMKAMLSYYYSTVMEQQVNGQLIEPLQIFPRACKPPGERNIHGLKVNTRAGPSQHTSPVVSDSLPSNSLKKSSAELRKILANGQMNEQDIRYRDTLGHGNGGTVYKAHHVPSGKILAVKVILLDITLELQKQIMSELEILYKCDSSYIIGFYGAFFVENRISICTEFMDGGSLDVYRKIPEHVLGRIAVAVVKGLTYLWSLKILHRDVKPSNMLVNTGGQVKLCDFGVSTQLVNSIAKTYVGTNAYMAPERISGEQYGIHSDVWSLGISFMELALGRFPYPQIQKNQGSLMPLQLLQCIVDEDSPVLPLGEFSEPFVHFITQCMRKQPKERPAPEELMGHPFIVQFNDGNSTVVSMWVCRALEERRSQQGPP</sequence>